<dbReference type="EMBL" id="BA000018">
    <property type="protein sequence ID" value="BAB41918.1"/>
    <property type="molecule type" value="Genomic_DNA"/>
</dbReference>
<dbReference type="PIR" id="C89845">
    <property type="entry name" value="C89845"/>
</dbReference>
<dbReference type="RefSeq" id="WP_000692521.1">
    <property type="nucleotide sequence ID" value="NC_002745.2"/>
</dbReference>
<dbReference type="SMR" id="P68812"/>
<dbReference type="EnsemblBacteria" id="BAB41918">
    <property type="protein sequence ID" value="BAB41918"/>
    <property type="gene ID" value="BAB41918"/>
</dbReference>
<dbReference type="KEGG" id="sau:SA0685"/>
<dbReference type="HOGENOM" id="CLU_114845_3_0_9"/>
<dbReference type="GO" id="GO:0010181">
    <property type="term" value="F:FMN binding"/>
    <property type="evidence" value="ECO:0007669"/>
    <property type="project" value="InterPro"/>
</dbReference>
<dbReference type="GO" id="GO:0036211">
    <property type="term" value="P:protein modification process"/>
    <property type="evidence" value="ECO:0007669"/>
    <property type="project" value="InterPro"/>
</dbReference>
<dbReference type="Gene3D" id="3.40.50.360">
    <property type="match status" value="1"/>
</dbReference>
<dbReference type="HAMAP" id="MF_00128">
    <property type="entry name" value="NrdI"/>
    <property type="match status" value="1"/>
</dbReference>
<dbReference type="InterPro" id="IPR029039">
    <property type="entry name" value="Flavoprotein-like_sf"/>
</dbReference>
<dbReference type="InterPro" id="IPR020852">
    <property type="entry name" value="RNR_Ib_NrdI_bac"/>
</dbReference>
<dbReference type="InterPro" id="IPR004465">
    <property type="entry name" value="RNR_NrdI"/>
</dbReference>
<dbReference type="NCBIfam" id="TIGR00333">
    <property type="entry name" value="nrdI"/>
    <property type="match status" value="1"/>
</dbReference>
<dbReference type="PANTHER" id="PTHR37297">
    <property type="entry name" value="PROTEIN NRDI"/>
    <property type="match status" value="1"/>
</dbReference>
<dbReference type="PANTHER" id="PTHR37297:SF1">
    <property type="entry name" value="PROTEIN NRDI"/>
    <property type="match status" value="1"/>
</dbReference>
<dbReference type="Pfam" id="PF07972">
    <property type="entry name" value="Flavodoxin_NdrI"/>
    <property type="match status" value="1"/>
</dbReference>
<dbReference type="PIRSF" id="PIRSF005087">
    <property type="entry name" value="NrdI"/>
    <property type="match status" value="1"/>
</dbReference>
<dbReference type="SUPFAM" id="SSF52218">
    <property type="entry name" value="Flavoproteins"/>
    <property type="match status" value="1"/>
</dbReference>
<protein>
    <recommendedName>
        <fullName>Protein NrdI</fullName>
    </recommendedName>
</protein>
<accession>P68812</accession>
<accession>Q99VP3</accession>
<accession>Q9Z5C9</accession>
<comment type="function">
    <text evidence="1">Probably involved in ribonucleotide reductase function.</text>
</comment>
<comment type="similarity">
    <text evidence="2">Belongs to the NrdI family.</text>
</comment>
<gene>
    <name type="primary">nrdI</name>
    <name type="ordered locus">SA0685</name>
</gene>
<name>NRDI_STAAN</name>
<reference key="1">
    <citation type="journal article" date="2001" name="Lancet">
        <title>Whole genome sequencing of meticillin-resistant Staphylococcus aureus.</title>
        <authorList>
            <person name="Kuroda M."/>
            <person name="Ohta T."/>
            <person name="Uchiyama I."/>
            <person name="Baba T."/>
            <person name="Yuzawa H."/>
            <person name="Kobayashi I."/>
            <person name="Cui L."/>
            <person name="Oguchi A."/>
            <person name="Aoki K."/>
            <person name="Nagai Y."/>
            <person name="Lian J.-Q."/>
            <person name="Ito T."/>
            <person name="Kanamori M."/>
            <person name="Matsumaru H."/>
            <person name="Maruyama A."/>
            <person name="Murakami H."/>
            <person name="Hosoyama A."/>
            <person name="Mizutani-Ui Y."/>
            <person name="Takahashi N.K."/>
            <person name="Sawano T."/>
            <person name="Inoue R."/>
            <person name="Kaito C."/>
            <person name="Sekimizu K."/>
            <person name="Hirakawa H."/>
            <person name="Kuhara S."/>
            <person name="Goto S."/>
            <person name="Yabuzaki J."/>
            <person name="Kanehisa M."/>
            <person name="Yamashita A."/>
            <person name="Oshima K."/>
            <person name="Furuya K."/>
            <person name="Yoshino C."/>
            <person name="Shiba T."/>
            <person name="Hattori M."/>
            <person name="Ogasawara N."/>
            <person name="Hayashi H."/>
            <person name="Hiramatsu K."/>
        </authorList>
    </citation>
    <scope>NUCLEOTIDE SEQUENCE [LARGE SCALE GENOMIC DNA]</scope>
    <source>
        <strain>N315</strain>
    </source>
</reference>
<proteinExistence type="inferred from homology"/>
<sequence length="132" mass="15166">MKIIYFSFTGNVRRFIKRTELENTLEITAENCMEPVHEPFIIVTGTIGFGEVPEPVQSFLEVNHQYIRGVAASGNRNWGLNFAKAGRTISEEYNVPLLMKFELHGKNKDVIEFKNKVGNFNENHGREKVQSY</sequence>
<feature type="chain" id="PRO_0000164336" description="Protein NrdI">
    <location>
        <begin position="1"/>
        <end position="132"/>
    </location>
</feature>
<evidence type="ECO:0000250" key="1"/>
<evidence type="ECO:0000305" key="2"/>
<organism>
    <name type="scientific">Staphylococcus aureus (strain N315)</name>
    <dbReference type="NCBI Taxonomy" id="158879"/>
    <lineage>
        <taxon>Bacteria</taxon>
        <taxon>Bacillati</taxon>
        <taxon>Bacillota</taxon>
        <taxon>Bacilli</taxon>
        <taxon>Bacillales</taxon>
        <taxon>Staphylococcaceae</taxon>
        <taxon>Staphylococcus</taxon>
    </lineage>
</organism>